<comment type="function">
    <text evidence="1 2">Plays a role in cilia formation and embryonic patterning. Requires for normal Sonic hedgehog (Shh) signaling in the neural tube and acts in combination with GLI2 and GLI3 to pattern ventral and intermediate neuronal cell types (By similarity). During ciliogenesis regulates the ciliary transition zone localization of some MKS complex proteins (By similarity).</text>
</comment>
<comment type="subunit">
    <text evidence="1">Part of the tectonic-like complex (also named B9 complex). Interacts with TMEM237, TMEM231, MKS1 and TMEM216.</text>
</comment>
<comment type="subcellular location">
    <subcellularLocation>
        <location evidence="4">Membrane</location>
        <topology evidence="4">Multi-pass membrane protein</topology>
    </subcellularLocation>
    <subcellularLocation>
        <location>Cell projection</location>
        <location>Cilium</location>
    </subcellularLocation>
    <text evidence="1">Localizes at the transition zone, a region between the basal body and the ciliary axoneme.</text>
</comment>
<keyword id="KW-0966">Cell projection</keyword>
<keyword id="KW-0970">Cilium biogenesis/degradation</keyword>
<keyword id="KW-0325">Glycoprotein</keyword>
<keyword id="KW-0472">Membrane</keyword>
<keyword id="KW-1185">Reference proteome</keyword>
<keyword id="KW-0812">Transmembrane</keyword>
<keyword id="KW-1133">Transmembrane helix</keyword>
<proteinExistence type="inferred from homology"/>
<reference key="1">
    <citation type="journal article" date="2004" name="Nature">
        <title>Genome sequence of the Brown Norway rat yields insights into mammalian evolution.</title>
        <authorList>
            <person name="Gibbs R.A."/>
            <person name="Weinstock G.M."/>
            <person name="Metzker M.L."/>
            <person name="Muzny D.M."/>
            <person name="Sodergren E.J."/>
            <person name="Scherer S."/>
            <person name="Scott G."/>
            <person name="Steffen D."/>
            <person name="Worley K.C."/>
            <person name="Burch P.E."/>
            <person name="Okwuonu G."/>
            <person name="Hines S."/>
            <person name="Lewis L."/>
            <person name="Deramo C."/>
            <person name="Delgado O."/>
            <person name="Dugan-Rocha S."/>
            <person name="Miner G."/>
            <person name="Morgan M."/>
            <person name="Hawes A."/>
            <person name="Gill R."/>
            <person name="Holt R.A."/>
            <person name="Adams M.D."/>
            <person name="Amanatides P.G."/>
            <person name="Baden-Tillson H."/>
            <person name="Barnstead M."/>
            <person name="Chin S."/>
            <person name="Evans C.A."/>
            <person name="Ferriera S."/>
            <person name="Fosler C."/>
            <person name="Glodek A."/>
            <person name="Gu Z."/>
            <person name="Jennings D."/>
            <person name="Kraft C.L."/>
            <person name="Nguyen T."/>
            <person name="Pfannkoch C.M."/>
            <person name="Sitter C."/>
            <person name="Sutton G.G."/>
            <person name="Venter J.C."/>
            <person name="Woodage T."/>
            <person name="Smith D."/>
            <person name="Lee H.-M."/>
            <person name="Gustafson E."/>
            <person name="Cahill P."/>
            <person name="Kana A."/>
            <person name="Doucette-Stamm L."/>
            <person name="Weinstock K."/>
            <person name="Fechtel K."/>
            <person name="Weiss R.B."/>
            <person name="Dunn D.M."/>
            <person name="Green E.D."/>
            <person name="Blakesley R.W."/>
            <person name="Bouffard G.G."/>
            <person name="De Jong P.J."/>
            <person name="Osoegawa K."/>
            <person name="Zhu B."/>
            <person name="Marra M."/>
            <person name="Schein J."/>
            <person name="Bosdet I."/>
            <person name="Fjell C."/>
            <person name="Jones S."/>
            <person name="Krzywinski M."/>
            <person name="Mathewson C."/>
            <person name="Siddiqui A."/>
            <person name="Wye N."/>
            <person name="McPherson J."/>
            <person name="Zhao S."/>
            <person name="Fraser C.M."/>
            <person name="Shetty J."/>
            <person name="Shatsman S."/>
            <person name="Geer K."/>
            <person name="Chen Y."/>
            <person name="Abramzon S."/>
            <person name="Nierman W.C."/>
            <person name="Havlak P.H."/>
            <person name="Chen R."/>
            <person name="Durbin K.J."/>
            <person name="Egan A."/>
            <person name="Ren Y."/>
            <person name="Song X.-Z."/>
            <person name="Li B."/>
            <person name="Liu Y."/>
            <person name="Qin X."/>
            <person name="Cawley S."/>
            <person name="Cooney A.J."/>
            <person name="D'Souza L.M."/>
            <person name="Martin K."/>
            <person name="Wu J.Q."/>
            <person name="Gonzalez-Garay M.L."/>
            <person name="Jackson A.R."/>
            <person name="Kalafus K.J."/>
            <person name="McLeod M.P."/>
            <person name="Milosavljevic A."/>
            <person name="Virk D."/>
            <person name="Volkov A."/>
            <person name="Wheeler D.A."/>
            <person name="Zhang Z."/>
            <person name="Bailey J.A."/>
            <person name="Eichler E.E."/>
            <person name="Tuzun E."/>
            <person name="Birney E."/>
            <person name="Mongin E."/>
            <person name="Ureta-Vidal A."/>
            <person name="Woodwark C."/>
            <person name="Zdobnov E."/>
            <person name="Bork P."/>
            <person name="Suyama M."/>
            <person name="Torrents D."/>
            <person name="Alexandersson M."/>
            <person name="Trask B.J."/>
            <person name="Young J.M."/>
            <person name="Huang H."/>
            <person name="Wang H."/>
            <person name="Xing H."/>
            <person name="Daniels S."/>
            <person name="Gietzen D."/>
            <person name="Schmidt J."/>
            <person name="Stevens K."/>
            <person name="Vitt U."/>
            <person name="Wingrove J."/>
            <person name="Camara F."/>
            <person name="Mar Alba M."/>
            <person name="Abril J.F."/>
            <person name="Guigo R."/>
            <person name="Smit A."/>
            <person name="Dubchak I."/>
            <person name="Rubin E.M."/>
            <person name="Couronne O."/>
            <person name="Poliakov A."/>
            <person name="Huebner N."/>
            <person name="Ganten D."/>
            <person name="Goesele C."/>
            <person name="Hummel O."/>
            <person name="Kreitler T."/>
            <person name="Lee Y.-A."/>
            <person name="Monti J."/>
            <person name="Schulz H."/>
            <person name="Zimdahl H."/>
            <person name="Himmelbauer H."/>
            <person name="Lehrach H."/>
            <person name="Jacob H.J."/>
            <person name="Bromberg S."/>
            <person name="Gullings-Handley J."/>
            <person name="Jensen-Seaman M.I."/>
            <person name="Kwitek A.E."/>
            <person name="Lazar J."/>
            <person name="Pasko D."/>
            <person name="Tonellato P.J."/>
            <person name="Twigger S."/>
            <person name="Ponting C.P."/>
            <person name="Duarte J.M."/>
            <person name="Rice S."/>
            <person name="Goodstadt L."/>
            <person name="Beatson S.A."/>
            <person name="Emes R.D."/>
            <person name="Winter E.E."/>
            <person name="Webber C."/>
            <person name="Brandt P."/>
            <person name="Nyakatura G."/>
            <person name="Adetobi M."/>
            <person name="Chiaromonte F."/>
            <person name="Elnitski L."/>
            <person name="Eswara P."/>
            <person name="Hardison R.C."/>
            <person name="Hou M."/>
            <person name="Kolbe D."/>
            <person name="Makova K."/>
            <person name="Miller W."/>
            <person name="Nekrutenko A."/>
            <person name="Riemer C."/>
            <person name="Schwartz S."/>
            <person name="Taylor J."/>
            <person name="Yang S."/>
            <person name="Zhang Y."/>
            <person name="Lindpaintner K."/>
            <person name="Andrews T.D."/>
            <person name="Caccamo M."/>
            <person name="Clamp M."/>
            <person name="Clarke L."/>
            <person name="Curwen V."/>
            <person name="Durbin R.M."/>
            <person name="Eyras E."/>
            <person name="Searle S.M."/>
            <person name="Cooper G.M."/>
            <person name="Batzoglou S."/>
            <person name="Brudno M."/>
            <person name="Sidow A."/>
            <person name="Stone E.A."/>
            <person name="Payseur B.A."/>
            <person name="Bourque G."/>
            <person name="Lopez-Otin C."/>
            <person name="Puente X.S."/>
            <person name="Chakrabarti K."/>
            <person name="Chatterji S."/>
            <person name="Dewey C."/>
            <person name="Pachter L."/>
            <person name="Bray N."/>
            <person name="Yap V.B."/>
            <person name="Caspi A."/>
            <person name="Tesler G."/>
            <person name="Pevzner P.A."/>
            <person name="Haussler D."/>
            <person name="Roskin K.M."/>
            <person name="Baertsch R."/>
            <person name="Clawson H."/>
            <person name="Furey T.S."/>
            <person name="Hinrichs A.S."/>
            <person name="Karolchik D."/>
            <person name="Kent W.J."/>
            <person name="Rosenbloom K.R."/>
            <person name="Trumbower H."/>
            <person name="Weirauch M."/>
            <person name="Cooper D.N."/>
            <person name="Stenson P.D."/>
            <person name="Ma B."/>
            <person name="Brent M."/>
            <person name="Arumugam M."/>
            <person name="Shteynberg D."/>
            <person name="Copley R.R."/>
            <person name="Taylor M.S."/>
            <person name="Riethman H."/>
            <person name="Mudunuri U."/>
            <person name="Peterson J."/>
            <person name="Guyer M."/>
            <person name="Felsenfeld A."/>
            <person name="Old S."/>
            <person name="Mockrin S."/>
            <person name="Collins F.S."/>
        </authorList>
    </citation>
    <scope>NUCLEOTIDE SEQUENCE [LARGE SCALE GENOMIC DNA]</scope>
    <source>
        <strain>Brown Norway</strain>
    </source>
</reference>
<reference key="2">
    <citation type="submission" date="2005-07" db="EMBL/GenBank/DDBJ databases">
        <authorList>
            <person name="Mural R.J."/>
            <person name="Adams M.D."/>
            <person name="Myers E.W."/>
            <person name="Smith H.O."/>
            <person name="Venter J.C."/>
        </authorList>
    </citation>
    <scope>NUCLEOTIDE SEQUENCE [LARGE SCALE GENOMIC DNA]</scope>
    <source>
        <strain>Brown Norway</strain>
    </source>
</reference>
<gene>
    <name evidence="5" type="primary">Tmem107</name>
</gene>
<dbReference type="EMBL" id="AABR06064371">
    <property type="status" value="NOT_ANNOTATED_CDS"/>
    <property type="molecule type" value="Genomic_DNA"/>
</dbReference>
<dbReference type="EMBL" id="CH473948">
    <property type="protein sequence ID" value="EDM04836.1"/>
    <property type="molecule type" value="Genomic_DNA"/>
</dbReference>
<dbReference type="RefSeq" id="NP_001103118.1">
    <property type="nucleotide sequence ID" value="NM_001109648.1"/>
</dbReference>
<dbReference type="FunCoup" id="D3ZFW5">
    <property type="interactions" value="423"/>
</dbReference>
<dbReference type="STRING" id="10116.ENSRNOP00000008787"/>
<dbReference type="GlyCosmos" id="D3ZFW5">
    <property type="glycosylation" value="1 site, No reported glycans"/>
</dbReference>
<dbReference type="GlyGen" id="D3ZFW5">
    <property type="glycosylation" value="1 site"/>
</dbReference>
<dbReference type="PaxDb" id="10116-ENSRNOP00000008787"/>
<dbReference type="GeneID" id="691750"/>
<dbReference type="KEGG" id="rno:691750"/>
<dbReference type="UCSC" id="RGD:1595972">
    <property type="organism name" value="rat"/>
</dbReference>
<dbReference type="AGR" id="RGD:1595972"/>
<dbReference type="CTD" id="84314"/>
<dbReference type="RGD" id="1595972">
    <property type="gene designation" value="Tmem107"/>
</dbReference>
<dbReference type="VEuPathDB" id="HostDB:ENSRNOG00000006519"/>
<dbReference type="eggNOG" id="ENOG502RZG7">
    <property type="taxonomic scope" value="Eukaryota"/>
</dbReference>
<dbReference type="HOGENOM" id="CLU_127745_0_0_1"/>
<dbReference type="InParanoid" id="D3ZFW5"/>
<dbReference type="PhylomeDB" id="D3ZFW5"/>
<dbReference type="TreeFam" id="TF328441"/>
<dbReference type="PRO" id="PR:D3ZFW5"/>
<dbReference type="Proteomes" id="UP000002494">
    <property type="component" value="Chromosome 10"/>
</dbReference>
<dbReference type="Proteomes" id="UP000234681">
    <property type="component" value="Chromosome 10"/>
</dbReference>
<dbReference type="Bgee" id="ENSRNOG00000006519">
    <property type="expression patterns" value="Expressed in ovary and 19 other cell types or tissues"/>
</dbReference>
<dbReference type="GO" id="GO:0035869">
    <property type="term" value="C:ciliary transition zone"/>
    <property type="evidence" value="ECO:0000250"/>
    <property type="project" value="UniProtKB"/>
</dbReference>
<dbReference type="GO" id="GO:0016020">
    <property type="term" value="C:membrane"/>
    <property type="evidence" value="ECO:0007669"/>
    <property type="project" value="UniProtKB-SubCell"/>
</dbReference>
<dbReference type="GO" id="GO:0036038">
    <property type="term" value="C:MKS complex"/>
    <property type="evidence" value="ECO:0000250"/>
    <property type="project" value="UniProtKB"/>
</dbReference>
<dbReference type="GO" id="GO:0060271">
    <property type="term" value="P:cilium assembly"/>
    <property type="evidence" value="ECO:0000250"/>
    <property type="project" value="UniProtKB"/>
</dbReference>
<dbReference type="GO" id="GO:0044782">
    <property type="term" value="P:cilium organization"/>
    <property type="evidence" value="ECO:0000266"/>
    <property type="project" value="RGD"/>
</dbReference>
<dbReference type="GO" id="GO:0097094">
    <property type="term" value="P:craniofacial suture morphogenesis"/>
    <property type="evidence" value="ECO:0000266"/>
    <property type="project" value="RGD"/>
</dbReference>
<dbReference type="GO" id="GO:0003127">
    <property type="term" value="P:detection of nodal flow"/>
    <property type="evidence" value="ECO:0000266"/>
    <property type="project" value="RGD"/>
</dbReference>
<dbReference type="GO" id="GO:0007368">
    <property type="term" value="P:determination of left/right symmetry"/>
    <property type="evidence" value="ECO:0000266"/>
    <property type="project" value="RGD"/>
</dbReference>
<dbReference type="GO" id="GO:0042733">
    <property type="term" value="P:embryonic digit morphogenesis"/>
    <property type="evidence" value="ECO:0000266"/>
    <property type="project" value="RGD"/>
</dbReference>
<dbReference type="GO" id="GO:0021532">
    <property type="term" value="P:neural tube patterning"/>
    <property type="evidence" value="ECO:0000266"/>
    <property type="project" value="RGD"/>
</dbReference>
<dbReference type="GO" id="GO:1905515">
    <property type="term" value="P:non-motile cilium assembly"/>
    <property type="evidence" value="ECO:0000266"/>
    <property type="project" value="RGD"/>
</dbReference>
<dbReference type="GO" id="GO:1904491">
    <property type="term" value="P:protein localization to ciliary transition zone"/>
    <property type="evidence" value="ECO:0000266"/>
    <property type="project" value="RGD"/>
</dbReference>
<dbReference type="GO" id="GO:0010468">
    <property type="term" value="P:regulation of gene expression"/>
    <property type="evidence" value="ECO:0000266"/>
    <property type="project" value="RGD"/>
</dbReference>
<dbReference type="GO" id="GO:0060021">
    <property type="term" value="P:roof of mouth development"/>
    <property type="evidence" value="ECO:0000266"/>
    <property type="project" value="RGD"/>
</dbReference>
<dbReference type="InterPro" id="IPR029248">
    <property type="entry name" value="TMEM107"/>
</dbReference>
<dbReference type="PANTHER" id="PTHR34341">
    <property type="entry name" value="TRANSMEMBRANE PROTEIN 107"/>
    <property type="match status" value="1"/>
</dbReference>
<dbReference type="PANTHER" id="PTHR34341:SF1">
    <property type="entry name" value="TRANSMEMBRANE PROTEIN 107"/>
    <property type="match status" value="1"/>
</dbReference>
<dbReference type="Pfam" id="PF14995">
    <property type="entry name" value="TMEM107"/>
    <property type="match status" value="1"/>
</dbReference>
<name>TM107_RAT</name>
<feature type="chain" id="PRO_0000419553" description="Transmembrane protein 107">
    <location>
        <begin position="1"/>
        <end position="140"/>
    </location>
</feature>
<feature type="transmembrane region" description="Helical" evidence="3">
    <location>
        <begin position="7"/>
        <end position="27"/>
    </location>
</feature>
<feature type="transmembrane region" description="Helical" evidence="3">
    <location>
        <begin position="53"/>
        <end position="73"/>
    </location>
</feature>
<feature type="transmembrane region" description="Helical" evidence="3">
    <location>
        <begin position="83"/>
        <end position="103"/>
    </location>
</feature>
<feature type="transmembrane region" description="Helical" evidence="3">
    <location>
        <begin position="113"/>
        <end position="133"/>
    </location>
</feature>
<feature type="glycosylation site" description="N-linked (GlcNAc...) asparagine" evidence="3">
    <location>
        <position position="79"/>
    </location>
</feature>
<evidence type="ECO:0000250" key="1">
    <source>
        <dbReference type="UniProtKB" id="Q6UX40"/>
    </source>
</evidence>
<evidence type="ECO:0000250" key="2">
    <source>
        <dbReference type="UniProtKB" id="Q9CPV0"/>
    </source>
</evidence>
<evidence type="ECO:0000255" key="3"/>
<evidence type="ECO:0000305" key="4"/>
<evidence type="ECO:0000312" key="5">
    <source>
        <dbReference type="RGD" id="1595972"/>
    </source>
</evidence>
<accession>D3ZFW5</accession>
<protein>
    <recommendedName>
        <fullName evidence="1">Transmembrane protein 107</fullName>
    </recommendedName>
</protein>
<organism>
    <name type="scientific">Rattus norvegicus</name>
    <name type="common">Rat</name>
    <dbReference type="NCBI Taxonomy" id="10116"/>
    <lineage>
        <taxon>Eukaryota</taxon>
        <taxon>Metazoa</taxon>
        <taxon>Chordata</taxon>
        <taxon>Craniata</taxon>
        <taxon>Vertebrata</taxon>
        <taxon>Euteleostomi</taxon>
        <taxon>Mammalia</taxon>
        <taxon>Eutheria</taxon>
        <taxon>Euarchontoglires</taxon>
        <taxon>Glires</taxon>
        <taxon>Rodentia</taxon>
        <taxon>Myomorpha</taxon>
        <taxon>Muroidea</taxon>
        <taxon>Muridae</taxon>
        <taxon>Murinae</taxon>
        <taxon>Rattus</taxon>
    </lineage>
</organism>
<sequence>MGRISGLVPSRFLTLLAHLVIVITLFWSRESNIQACLPLKFTPEEYEKQDNQLVAALCLTLGLFAVELAGFLSGVSMFNSTQSLLSIAAHCSASVALSFFIFERWECTTYWYIFAFCSAFPAVTETALFIAVFGLKKKPF</sequence>